<accession>Q0I1I3</accession>
<dbReference type="EC" id="2.7.7.77" evidence="1"/>
<dbReference type="EMBL" id="CP000436">
    <property type="protein sequence ID" value="ABI24588.1"/>
    <property type="molecule type" value="Genomic_DNA"/>
</dbReference>
<dbReference type="SMR" id="Q0I1I3"/>
<dbReference type="KEGG" id="hso:HS_0310"/>
<dbReference type="eggNOG" id="COG0746">
    <property type="taxonomic scope" value="Bacteria"/>
</dbReference>
<dbReference type="HOGENOM" id="CLU_055597_5_1_6"/>
<dbReference type="GO" id="GO:0005737">
    <property type="term" value="C:cytoplasm"/>
    <property type="evidence" value="ECO:0007669"/>
    <property type="project" value="UniProtKB-SubCell"/>
</dbReference>
<dbReference type="GO" id="GO:0005525">
    <property type="term" value="F:GTP binding"/>
    <property type="evidence" value="ECO:0007669"/>
    <property type="project" value="UniProtKB-UniRule"/>
</dbReference>
<dbReference type="GO" id="GO:0046872">
    <property type="term" value="F:metal ion binding"/>
    <property type="evidence" value="ECO:0007669"/>
    <property type="project" value="UniProtKB-KW"/>
</dbReference>
<dbReference type="GO" id="GO:0061603">
    <property type="term" value="F:molybdenum cofactor guanylyltransferase activity"/>
    <property type="evidence" value="ECO:0007669"/>
    <property type="project" value="UniProtKB-EC"/>
</dbReference>
<dbReference type="GO" id="GO:1902758">
    <property type="term" value="P:bis(molybdopterin guanine dinucleotide)molybdenum biosynthetic process"/>
    <property type="evidence" value="ECO:0007669"/>
    <property type="project" value="TreeGrafter"/>
</dbReference>
<dbReference type="CDD" id="cd02503">
    <property type="entry name" value="MobA"/>
    <property type="match status" value="1"/>
</dbReference>
<dbReference type="Gene3D" id="3.90.550.10">
    <property type="entry name" value="Spore Coat Polysaccharide Biosynthesis Protein SpsA, Chain A"/>
    <property type="match status" value="1"/>
</dbReference>
<dbReference type="HAMAP" id="MF_00316">
    <property type="entry name" value="MobA"/>
    <property type="match status" value="1"/>
</dbReference>
<dbReference type="InterPro" id="IPR025877">
    <property type="entry name" value="MobA-like_NTP_Trfase"/>
</dbReference>
<dbReference type="InterPro" id="IPR013482">
    <property type="entry name" value="Molybde_CF_guanTrfase"/>
</dbReference>
<dbReference type="InterPro" id="IPR029044">
    <property type="entry name" value="Nucleotide-diphossugar_trans"/>
</dbReference>
<dbReference type="NCBIfam" id="TIGR02665">
    <property type="entry name" value="molyb_mobA"/>
    <property type="match status" value="1"/>
</dbReference>
<dbReference type="PANTHER" id="PTHR19136">
    <property type="entry name" value="MOLYBDENUM COFACTOR GUANYLYLTRANSFERASE"/>
    <property type="match status" value="1"/>
</dbReference>
<dbReference type="PANTHER" id="PTHR19136:SF81">
    <property type="entry name" value="MOLYBDENUM COFACTOR GUANYLYLTRANSFERASE"/>
    <property type="match status" value="1"/>
</dbReference>
<dbReference type="Pfam" id="PF12804">
    <property type="entry name" value="NTP_transf_3"/>
    <property type="match status" value="1"/>
</dbReference>
<dbReference type="SUPFAM" id="SSF53448">
    <property type="entry name" value="Nucleotide-diphospho-sugar transferases"/>
    <property type="match status" value="1"/>
</dbReference>
<reference key="1">
    <citation type="journal article" date="2007" name="J. Bacteriol.">
        <title>Complete genome sequence of Haemophilus somnus (Histophilus somni) strain 129Pt and comparison to Haemophilus ducreyi 35000HP and Haemophilus influenzae Rd.</title>
        <authorList>
            <person name="Challacombe J.F."/>
            <person name="Duncan A.J."/>
            <person name="Brettin T.S."/>
            <person name="Bruce D."/>
            <person name="Chertkov O."/>
            <person name="Detter J.C."/>
            <person name="Han C.S."/>
            <person name="Misra M."/>
            <person name="Richardson P."/>
            <person name="Tapia R."/>
            <person name="Thayer N."/>
            <person name="Xie G."/>
            <person name="Inzana T.J."/>
        </authorList>
    </citation>
    <scope>NUCLEOTIDE SEQUENCE [LARGE SCALE GENOMIC DNA]</scope>
    <source>
        <strain>129Pt</strain>
    </source>
</reference>
<comment type="function">
    <text evidence="1">Transfers a GMP moiety from GTP to Mo-molybdopterin (Mo-MPT) cofactor (Moco or molybdenum cofactor) to form Mo-molybdopterin guanine dinucleotide (Mo-MGD) cofactor.</text>
</comment>
<comment type="catalytic activity">
    <reaction evidence="1">
        <text>Mo-molybdopterin + GTP + H(+) = Mo-molybdopterin guanine dinucleotide + diphosphate</text>
        <dbReference type="Rhea" id="RHEA:34243"/>
        <dbReference type="ChEBI" id="CHEBI:15378"/>
        <dbReference type="ChEBI" id="CHEBI:33019"/>
        <dbReference type="ChEBI" id="CHEBI:37565"/>
        <dbReference type="ChEBI" id="CHEBI:71302"/>
        <dbReference type="ChEBI" id="CHEBI:71310"/>
        <dbReference type="EC" id="2.7.7.77"/>
    </reaction>
</comment>
<comment type="cofactor">
    <cofactor evidence="1">
        <name>Mg(2+)</name>
        <dbReference type="ChEBI" id="CHEBI:18420"/>
    </cofactor>
</comment>
<comment type="subunit">
    <text evidence="1">Monomer.</text>
</comment>
<comment type="subcellular location">
    <subcellularLocation>
        <location evidence="1">Cytoplasm</location>
    </subcellularLocation>
</comment>
<comment type="domain">
    <text evidence="1">The N-terminal domain determines nucleotide recognition and specific binding, while the C-terminal domain determines the specific binding to the target protein.</text>
</comment>
<comment type="similarity">
    <text evidence="1">Belongs to the MobA family.</text>
</comment>
<name>MOBA_HISS1</name>
<feature type="chain" id="PRO_1000019120" description="Molybdenum cofactor guanylyltransferase">
    <location>
        <begin position="1"/>
        <end position="195"/>
    </location>
</feature>
<feature type="binding site" evidence="1">
    <location>
        <begin position="10"/>
        <end position="12"/>
    </location>
    <ligand>
        <name>GTP</name>
        <dbReference type="ChEBI" id="CHEBI:37565"/>
    </ligand>
</feature>
<feature type="binding site" evidence="1">
    <location>
        <position position="23"/>
    </location>
    <ligand>
        <name>GTP</name>
        <dbReference type="ChEBI" id="CHEBI:37565"/>
    </ligand>
</feature>
<feature type="binding site" evidence="1">
    <location>
        <position position="51"/>
    </location>
    <ligand>
        <name>GTP</name>
        <dbReference type="ChEBI" id="CHEBI:37565"/>
    </ligand>
</feature>
<feature type="binding site" evidence="1">
    <location>
        <position position="69"/>
    </location>
    <ligand>
        <name>GTP</name>
        <dbReference type="ChEBI" id="CHEBI:37565"/>
    </ligand>
</feature>
<feature type="binding site" evidence="1">
    <location>
        <position position="99"/>
    </location>
    <ligand>
        <name>GTP</name>
        <dbReference type="ChEBI" id="CHEBI:37565"/>
    </ligand>
</feature>
<feature type="binding site" evidence="1">
    <location>
        <position position="99"/>
    </location>
    <ligand>
        <name>Mg(2+)</name>
        <dbReference type="ChEBI" id="CHEBI:18420"/>
    </ligand>
</feature>
<keyword id="KW-0963">Cytoplasm</keyword>
<keyword id="KW-0342">GTP-binding</keyword>
<keyword id="KW-0460">Magnesium</keyword>
<keyword id="KW-0479">Metal-binding</keyword>
<keyword id="KW-0501">Molybdenum cofactor biosynthesis</keyword>
<keyword id="KW-0547">Nucleotide-binding</keyword>
<keyword id="KW-0808">Transferase</keyword>
<sequence length="195" mass="21865">MATTISAVILAGGQAKRMAGLDKGLQLLQGKPLYQHCLQRLTHQVSSISINANRHQAIYQQSGVEVFGDELEDFQGPLSGILTALERANTDFVLFVPCDSPFLPLNLCEKLQSAVENSKSLLAYANDGEREHPAFSLLSTQLKLPLRAYLQSGHRQMLQFFRQHKGISVDFRLQKQAFVNMNTLQDIEKYQNIYA</sequence>
<evidence type="ECO:0000255" key="1">
    <source>
        <dbReference type="HAMAP-Rule" id="MF_00316"/>
    </source>
</evidence>
<gene>
    <name evidence="1" type="primary">mobA</name>
    <name type="ordered locus">HS_0310</name>
</gene>
<protein>
    <recommendedName>
        <fullName evidence="1">Molybdenum cofactor guanylyltransferase</fullName>
        <shortName evidence="1">MoCo guanylyltransferase</shortName>
        <ecNumber evidence="1">2.7.7.77</ecNumber>
    </recommendedName>
    <alternativeName>
        <fullName evidence="1">GTP:molybdopterin guanylyltransferase</fullName>
    </alternativeName>
    <alternativeName>
        <fullName evidence="1">Mo-MPT guanylyltransferase</fullName>
    </alternativeName>
    <alternativeName>
        <fullName evidence="1">Molybdopterin guanylyltransferase</fullName>
    </alternativeName>
    <alternativeName>
        <fullName evidence="1">Molybdopterin-guanine dinucleotide synthase</fullName>
        <shortName evidence="1">MGD synthase</shortName>
    </alternativeName>
</protein>
<organism>
    <name type="scientific">Histophilus somni (strain 129Pt)</name>
    <name type="common">Haemophilus somnus</name>
    <dbReference type="NCBI Taxonomy" id="205914"/>
    <lineage>
        <taxon>Bacteria</taxon>
        <taxon>Pseudomonadati</taxon>
        <taxon>Pseudomonadota</taxon>
        <taxon>Gammaproteobacteria</taxon>
        <taxon>Pasteurellales</taxon>
        <taxon>Pasteurellaceae</taxon>
        <taxon>Histophilus</taxon>
    </lineage>
</organism>
<proteinExistence type="inferred from homology"/>